<accession>B0SAT2</accession>
<name>ISPF_LEPBA</name>
<protein>
    <recommendedName>
        <fullName evidence="1">2-C-methyl-D-erythritol 2,4-cyclodiphosphate synthase</fullName>
        <shortName evidence="1">MECDP-synthase</shortName>
        <shortName evidence="1">MECPP-synthase</shortName>
        <shortName evidence="1">MECPS</shortName>
        <ecNumber evidence="1">4.6.1.12</ecNumber>
    </recommendedName>
</protein>
<reference key="1">
    <citation type="journal article" date="2008" name="PLoS ONE">
        <title>Genome sequence of the saprophyte Leptospira biflexa provides insights into the evolution of Leptospira and the pathogenesis of leptospirosis.</title>
        <authorList>
            <person name="Picardeau M."/>
            <person name="Bulach D.M."/>
            <person name="Bouchier C."/>
            <person name="Zuerner R.L."/>
            <person name="Zidane N."/>
            <person name="Wilson P.J."/>
            <person name="Creno S."/>
            <person name="Kuczek E.S."/>
            <person name="Bommezzadri S."/>
            <person name="Davis J.C."/>
            <person name="McGrath A."/>
            <person name="Johnson M.J."/>
            <person name="Boursaux-Eude C."/>
            <person name="Seemann T."/>
            <person name="Rouy Z."/>
            <person name="Coppel R.L."/>
            <person name="Rood J.I."/>
            <person name="Lajus A."/>
            <person name="Davies J.K."/>
            <person name="Medigue C."/>
            <person name="Adler B."/>
        </authorList>
    </citation>
    <scope>NUCLEOTIDE SEQUENCE [LARGE SCALE GENOMIC DNA]</scope>
    <source>
        <strain>Patoc 1 / Ames</strain>
    </source>
</reference>
<organism>
    <name type="scientific">Leptospira biflexa serovar Patoc (strain Patoc 1 / Ames)</name>
    <dbReference type="NCBI Taxonomy" id="355278"/>
    <lineage>
        <taxon>Bacteria</taxon>
        <taxon>Pseudomonadati</taxon>
        <taxon>Spirochaetota</taxon>
        <taxon>Spirochaetia</taxon>
        <taxon>Leptospirales</taxon>
        <taxon>Leptospiraceae</taxon>
        <taxon>Leptospira</taxon>
    </lineage>
</organism>
<evidence type="ECO:0000255" key="1">
    <source>
        <dbReference type="HAMAP-Rule" id="MF_00107"/>
    </source>
</evidence>
<keyword id="KW-0414">Isoprene biosynthesis</keyword>
<keyword id="KW-0456">Lyase</keyword>
<keyword id="KW-0479">Metal-binding</keyword>
<gene>
    <name evidence="1" type="primary">ispF</name>
    <name type="ordered locus">LBF_0313</name>
</gene>
<feature type="chain" id="PRO_1000094269" description="2-C-methyl-D-erythritol 2,4-cyclodiphosphate synthase">
    <location>
        <begin position="1"/>
        <end position="162"/>
    </location>
</feature>
<feature type="binding site" evidence="1">
    <location>
        <begin position="9"/>
        <end position="11"/>
    </location>
    <ligand>
        <name>4-CDP-2-C-methyl-D-erythritol 2-phosphate</name>
        <dbReference type="ChEBI" id="CHEBI:57919"/>
    </ligand>
</feature>
<feature type="binding site" evidence="1">
    <location>
        <position position="9"/>
    </location>
    <ligand>
        <name>a divalent metal cation</name>
        <dbReference type="ChEBI" id="CHEBI:60240"/>
    </ligand>
</feature>
<feature type="binding site" evidence="1">
    <location>
        <position position="11"/>
    </location>
    <ligand>
        <name>a divalent metal cation</name>
        <dbReference type="ChEBI" id="CHEBI:60240"/>
    </ligand>
</feature>
<feature type="binding site" evidence="1">
    <location>
        <begin position="37"/>
        <end position="38"/>
    </location>
    <ligand>
        <name>4-CDP-2-C-methyl-D-erythritol 2-phosphate</name>
        <dbReference type="ChEBI" id="CHEBI:57919"/>
    </ligand>
</feature>
<feature type="binding site" evidence="1">
    <location>
        <position position="45"/>
    </location>
    <ligand>
        <name>a divalent metal cation</name>
        <dbReference type="ChEBI" id="CHEBI:60240"/>
    </ligand>
</feature>
<feature type="binding site" evidence="1">
    <location>
        <begin position="59"/>
        <end position="61"/>
    </location>
    <ligand>
        <name>4-CDP-2-C-methyl-D-erythritol 2-phosphate</name>
        <dbReference type="ChEBI" id="CHEBI:57919"/>
    </ligand>
</feature>
<feature type="binding site" evidence="1">
    <location>
        <begin position="64"/>
        <end position="68"/>
    </location>
    <ligand>
        <name>4-CDP-2-C-methyl-D-erythritol 2-phosphate</name>
        <dbReference type="ChEBI" id="CHEBI:57919"/>
    </ligand>
</feature>
<feature type="binding site" evidence="1">
    <location>
        <begin position="135"/>
        <end position="138"/>
    </location>
    <ligand>
        <name>4-CDP-2-C-methyl-D-erythritol 2-phosphate</name>
        <dbReference type="ChEBI" id="CHEBI:57919"/>
    </ligand>
</feature>
<feature type="binding site" evidence="1">
    <location>
        <position position="145"/>
    </location>
    <ligand>
        <name>4-CDP-2-C-methyl-D-erythritol 2-phosphate</name>
        <dbReference type="ChEBI" id="CHEBI:57919"/>
    </ligand>
</feature>
<feature type="site" description="Transition state stabilizer" evidence="1">
    <location>
        <position position="37"/>
    </location>
</feature>
<feature type="site" description="Transition state stabilizer" evidence="1">
    <location>
        <position position="136"/>
    </location>
</feature>
<comment type="function">
    <text evidence="1">Involved in the biosynthesis of isopentenyl diphosphate (IPP) and dimethylallyl diphosphate (DMAPP), two major building blocks of isoprenoid compounds. Catalyzes the conversion of 4-diphosphocytidyl-2-C-methyl-D-erythritol 2-phosphate (CDP-ME2P) to 2-C-methyl-D-erythritol 2,4-cyclodiphosphate (ME-CPP) with a corresponding release of cytidine 5-monophosphate (CMP).</text>
</comment>
<comment type="catalytic activity">
    <reaction evidence="1">
        <text>4-CDP-2-C-methyl-D-erythritol 2-phosphate = 2-C-methyl-D-erythritol 2,4-cyclic diphosphate + CMP</text>
        <dbReference type="Rhea" id="RHEA:23864"/>
        <dbReference type="ChEBI" id="CHEBI:57919"/>
        <dbReference type="ChEBI" id="CHEBI:58483"/>
        <dbReference type="ChEBI" id="CHEBI:60377"/>
        <dbReference type="EC" id="4.6.1.12"/>
    </reaction>
</comment>
<comment type="cofactor">
    <cofactor evidence="1">
        <name>a divalent metal cation</name>
        <dbReference type="ChEBI" id="CHEBI:60240"/>
    </cofactor>
    <text evidence="1">Binds 1 divalent metal cation per subunit.</text>
</comment>
<comment type="pathway">
    <text evidence="1">Isoprenoid biosynthesis; isopentenyl diphosphate biosynthesis via DXP pathway; isopentenyl diphosphate from 1-deoxy-D-xylulose 5-phosphate: step 4/6.</text>
</comment>
<comment type="subunit">
    <text evidence="1">Homotrimer.</text>
</comment>
<comment type="similarity">
    <text evidence="1">Belongs to the IspF family.</text>
</comment>
<sequence>MFRVGNGIDFHKLIHEPFRPLVLAGVEIKSEFAFLGHSDADVILHAVADAILGALSLGDIGVHFPDTDPQYKNMKSTRIIEKCLELVAEKKFKLINVDCTYVGDHPKISPIRAELNASLANITKLPLDCVSIKATTSEGMGALGRSEGVMVMATVLIESLKK</sequence>
<proteinExistence type="inferred from homology"/>
<dbReference type="EC" id="4.6.1.12" evidence="1"/>
<dbReference type="EMBL" id="CP000777">
    <property type="protein sequence ID" value="ABZ92859.1"/>
    <property type="molecule type" value="Genomic_DNA"/>
</dbReference>
<dbReference type="RefSeq" id="WP_012387354.1">
    <property type="nucleotide sequence ID" value="NC_010842.1"/>
</dbReference>
<dbReference type="SMR" id="B0SAT2"/>
<dbReference type="KEGG" id="lbf:LBF_0313"/>
<dbReference type="HOGENOM" id="CLU_084630_2_1_12"/>
<dbReference type="UniPathway" id="UPA00056">
    <property type="reaction ID" value="UER00095"/>
</dbReference>
<dbReference type="GO" id="GO:0008685">
    <property type="term" value="F:2-C-methyl-D-erythritol 2,4-cyclodiphosphate synthase activity"/>
    <property type="evidence" value="ECO:0007669"/>
    <property type="project" value="UniProtKB-UniRule"/>
</dbReference>
<dbReference type="GO" id="GO:0046872">
    <property type="term" value="F:metal ion binding"/>
    <property type="evidence" value="ECO:0007669"/>
    <property type="project" value="UniProtKB-KW"/>
</dbReference>
<dbReference type="GO" id="GO:0019288">
    <property type="term" value="P:isopentenyl diphosphate biosynthetic process, methylerythritol 4-phosphate pathway"/>
    <property type="evidence" value="ECO:0007669"/>
    <property type="project" value="UniProtKB-UniRule"/>
</dbReference>
<dbReference type="GO" id="GO:0016114">
    <property type="term" value="P:terpenoid biosynthetic process"/>
    <property type="evidence" value="ECO:0007669"/>
    <property type="project" value="InterPro"/>
</dbReference>
<dbReference type="CDD" id="cd00554">
    <property type="entry name" value="MECDP_synthase"/>
    <property type="match status" value="1"/>
</dbReference>
<dbReference type="Gene3D" id="3.30.1330.50">
    <property type="entry name" value="2-C-methyl-D-erythritol 2,4-cyclodiphosphate synthase"/>
    <property type="match status" value="1"/>
</dbReference>
<dbReference type="HAMAP" id="MF_00107">
    <property type="entry name" value="IspF"/>
    <property type="match status" value="1"/>
</dbReference>
<dbReference type="InterPro" id="IPR003526">
    <property type="entry name" value="MECDP_synthase"/>
</dbReference>
<dbReference type="InterPro" id="IPR020555">
    <property type="entry name" value="MECDP_synthase_CS"/>
</dbReference>
<dbReference type="InterPro" id="IPR036571">
    <property type="entry name" value="MECDP_synthase_sf"/>
</dbReference>
<dbReference type="NCBIfam" id="TIGR00151">
    <property type="entry name" value="ispF"/>
    <property type="match status" value="1"/>
</dbReference>
<dbReference type="PANTHER" id="PTHR43181">
    <property type="entry name" value="2-C-METHYL-D-ERYTHRITOL 2,4-CYCLODIPHOSPHATE SYNTHASE, CHLOROPLASTIC"/>
    <property type="match status" value="1"/>
</dbReference>
<dbReference type="PANTHER" id="PTHR43181:SF1">
    <property type="entry name" value="2-C-METHYL-D-ERYTHRITOL 2,4-CYCLODIPHOSPHATE SYNTHASE, CHLOROPLASTIC"/>
    <property type="match status" value="1"/>
</dbReference>
<dbReference type="Pfam" id="PF02542">
    <property type="entry name" value="YgbB"/>
    <property type="match status" value="1"/>
</dbReference>
<dbReference type="SUPFAM" id="SSF69765">
    <property type="entry name" value="IpsF-like"/>
    <property type="match status" value="1"/>
</dbReference>
<dbReference type="PROSITE" id="PS01350">
    <property type="entry name" value="ISPF"/>
    <property type="match status" value="1"/>
</dbReference>